<proteinExistence type="inferred from homology"/>
<accession>Q0IC27</accession>
<dbReference type="EC" id="4.6.1.12" evidence="1"/>
<dbReference type="EMBL" id="CP000435">
    <property type="protein sequence ID" value="ABI47225.1"/>
    <property type="molecule type" value="Genomic_DNA"/>
</dbReference>
<dbReference type="RefSeq" id="WP_011618722.1">
    <property type="nucleotide sequence ID" value="NC_008319.1"/>
</dbReference>
<dbReference type="SMR" id="Q0IC27"/>
<dbReference type="STRING" id="64471.sync_0781"/>
<dbReference type="KEGG" id="syg:sync_0781"/>
<dbReference type="eggNOG" id="COG0245">
    <property type="taxonomic scope" value="Bacteria"/>
</dbReference>
<dbReference type="HOGENOM" id="CLU_084630_2_0_3"/>
<dbReference type="OrthoDB" id="9804336at2"/>
<dbReference type="UniPathway" id="UPA00056">
    <property type="reaction ID" value="UER00095"/>
</dbReference>
<dbReference type="Proteomes" id="UP000001961">
    <property type="component" value="Chromosome"/>
</dbReference>
<dbReference type="GO" id="GO:0008685">
    <property type="term" value="F:2-C-methyl-D-erythritol 2,4-cyclodiphosphate synthase activity"/>
    <property type="evidence" value="ECO:0007669"/>
    <property type="project" value="UniProtKB-UniRule"/>
</dbReference>
<dbReference type="GO" id="GO:0046872">
    <property type="term" value="F:metal ion binding"/>
    <property type="evidence" value="ECO:0007669"/>
    <property type="project" value="UniProtKB-KW"/>
</dbReference>
<dbReference type="GO" id="GO:0019288">
    <property type="term" value="P:isopentenyl diphosphate biosynthetic process, methylerythritol 4-phosphate pathway"/>
    <property type="evidence" value="ECO:0007669"/>
    <property type="project" value="UniProtKB-UniRule"/>
</dbReference>
<dbReference type="GO" id="GO:0016114">
    <property type="term" value="P:terpenoid biosynthetic process"/>
    <property type="evidence" value="ECO:0007669"/>
    <property type="project" value="InterPro"/>
</dbReference>
<dbReference type="CDD" id="cd00554">
    <property type="entry name" value="MECDP_synthase"/>
    <property type="match status" value="1"/>
</dbReference>
<dbReference type="FunFam" id="3.30.1330.50:FF:000001">
    <property type="entry name" value="2-C-methyl-D-erythritol 2,4-cyclodiphosphate synthase"/>
    <property type="match status" value="1"/>
</dbReference>
<dbReference type="Gene3D" id="3.30.1330.50">
    <property type="entry name" value="2-C-methyl-D-erythritol 2,4-cyclodiphosphate synthase"/>
    <property type="match status" value="1"/>
</dbReference>
<dbReference type="HAMAP" id="MF_00107">
    <property type="entry name" value="IspF"/>
    <property type="match status" value="1"/>
</dbReference>
<dbReference type="InterPro" id="IPR003526">
    <property type="entry name" value="MECDP_synthase"/>
</dbReference>
<dbReference type="InterPro" id="IPR020555">
    <property type="entry name" value="MECDP_synthase_CS"/>
</dbReference>
<dbReference type="InterPro" id="IPR036571">
    <property type="entry name" value="MECDP_synthase_sf"/>
</dbReference>
<dbReference type="NCBIfam" id="TIGR00151">
    <property type="entry name" value="ispF"/>
    <property type="match status" value="1"/>
</dbReference>
<dbReference type="PANTHER" id="PTHR43181">
    <property type="entry name" value="2-C-METHYL-D-ERYTHRITOL 2,4-CYCLODIPHOSPHATE SYNTHASE, CHLOROPLASTIC"/>
    <property type="match status" value="1"/>
</dbReference>
<dbReference type="PANTHER" id="PTHR43181:SF1">
    <property type="entry name" value="2-C-METHYL-D-ERYTHRITOL 2,4-CYCLODIPHOSPHATE SYNTHASE, CHLOROPLASTIC"/>
    <property type="match status" value="1"/>
</dbReference>
<dbReference type="Pfam" id="PF02542">
    <property type="entry name" value="YgbB"/>
    <property type="match status" value="1"/>
</dbReference>
<dbReference type="SUPFAM" id="SSF69765">
    <property type="entry name" value="IpsF-like"/>
    <property type="match status" value="1"/>
</dbReference>
<dbReference type="PROSITE" id="PS01350">
    <property type="entry name" value="ISPF"/>
    <property type="match status" value="1"/>
</dbReference>
<comment type="function">
    <text evidence="1">Involved in the biosynthesis of isopentenyl diphosphate (IPP) and dimethylallyl diphosphate (DMAPP), two major building blocks of isoprenoid compounds. Catalyzes the conversion of 4-diphosphocytidyl-2-C-methyl-D-erythritol 2-phosphate (CDP-ME2P) to 2-C-methyl-D-erythritol 2,4-cyclodiphosphate (ME-CPP) with a corresponding release of cytidine 5-monophosphate (CMP).</text>
</comment>
<comment type="catalytic activity">
    <reaction evidence="1">
        <text>4-CDP-2-C-methyl-D-erythritol 2-phosphate = 2-C-methyl-D-erythritol 2,4-cyclic diphosphate + CMP</text>
        <dbReference type="Rhea" id="RHEA:23864"/>
        <dbReference type="ChEBI" id="CHEBI:57919"/>
        <dbReference type="ChEBI" id="CHEBI:58483"/>
        <dbReference type="ChEBI" id="CHEBI:60377"/>
        <dbReference type="EC" id="4.6.1.12"/>
    </reaction>
</comment>
<comment type="cofactor">
    <cofactor evidence="1">
        <name>a divalent metal cation</name>
        <dbReference type="ChEBI" id="CHEBI:60240"/>
    </cofactor>
    <text evidence="1">Binds 1 divalent metal cation per subunit.</text>
</comment>
<comment type="pathway">
    <text evidence="1">Isoprenoid biosynthesis; isopentenyl diphosphate biosynthesis via DXP pathway; isopentenyl diphosphate from 1-deoxy-D-xylulose 5-phosphate: step 4/6.</text>
</comment>
<comment type="subunit">
    <text evidence="1">Homotrimer.</text>
</comment>
<comment type="similarity">
    <text evidence="1">Belongs to the IspF family.</text>
</comment>
<feature type="chain" id="PRO_1000022889" description="2-C-methyl-D-erythritol 2,4-cyclodiphosphate synthase">
    <location>
        <begin position="1"/>
        <end position="166"/>
    </location>
</feature>
<feature type="binding site" evidence="1">
    <location>
        <begin position="15"/>
        <end position="17"/>
    </location>
    <ligand>
        <name>4-CDP-2-C-methyl-D-erythritol 2-phosphate</name>
        <dbReference type="ChEBI" id="CHEBI:57919"/>
    </ligand>
</feature>
<feature type="binding site" evidence="1">
    <location>
        <position position="15"/>
    </location>
    <ligand>
        <name>a divalent metal cation</name>
        <dbReference type="ChEBI" id="CHEBI:60240"/>
    </ligand>
</feature>
<feature type="binding site" evidence="1">
    <location>
        <position position="17"/>
    </location>
    <ligand>
        <name>a divalent metal cation</name>
        <dbReference type="ChEBI" id="CHEBI:60240"/>
    </ligand>
</feature>
<feature type="binding site" evidence="1">
    <location>
        <begin position="43"/>
        <end position="44"/>
    </location>
    <ligand>
        <name>4-CDP-2-C-methyl-D-erythritol 2-phosphate</name>
        <dbReference type="ChEBI" id="CHEBI:57919"/>
    </ligand>
</feature>
<feature type="binding site" evidence="1">
    <location>
        <position position="51"/>
    </location>
    <ligand>
        <name>a divalent metal cation</name>
        <dbReference type="ChEBI" id="CHEBI:60240"/>
    </ligand>
</feature>
<feature type="binding site" evidence="1">
    <location>
        <begin position="65"/>
        <end position="67"/>
    </location>
    <ligand>
        <name>4-CDP-2-C-methyl-D-erythritol 2-phosphate</name>
        <dbReference type="ChEBI" id="CHEBI:57919"/>
    </ligand>
</feature>
<feature type="binding site" evidence="1">
    <location>
        <begin position="141"/>
        <end position="144"/>
    </location>
    <ligand>
        <name>4-CDP-2-C-methyl-D-erythritol 2-phosphate</name>
        <dbReference type="ChEBI" id="CHEBI:57919"/>
    </ligand>
</feature>
<feature type="binding site" evidence="1">
    <location>
        <position position="151"/>
    </location>
    <ligand>
        <name>4-CDP-2-C-methyl-D-erythritol 2-phosphate</name>
        <dbReference type="ChEBI" id="CHEBI:57919"/>
    </ligand>
</feature>
<feature type="site" description="Transition state stabilizer" evidence="1">
    <location>
        <position position="43"/>
    </location>
</feature>
<feature type="site" description="Transition state stabilizer" evidence="1">
    <location>
        <position position="142"/>
    </location>
</feature>
<keyword id="KW-0414">Isoprene biosynthesis</keyword>
<keyword id="KW-0456">Lyase</keyword>
<keyword id="KW-0479">Metal-binding</keyword>
<keyword id="KW-1185">Reference proteome</keyword>
<sequence>MTSSVPSLRIGNGYDVHRLVPDRPLILGGQLLEHPAGLGLDGHSDADVLVHAIMDALLGALSLGDIGKYFPPSDPQWKGADSLVLLEQVVALVKARGWGVVNVDAVLIAERPKLKPHIEAMRSAIALRIGVAPDQVGVKATTNEQLGPEGREEGISCQAVALLQAL</sequence>
<organism>
    <name type="scientific">Synechococcus sp. (strain CC9311)</name>
    <dbReference type="NCBI Taxonomy" id="64471"/>
    <lineage>
        <taxon>Bacteria</taxon>
        <taxon>Bacillati</taxon>
        <taxon>Cyanobacteriota</taxon>
        <taxon>Cyanophyceae</taxon>
        <taxon>Synechococcales</taxon>
        <taxon>Synechococcaceae</taxon>
        <taxon>Synechococcus</taxon>
    </lineage>
</organism>
<name>ISPF_SYNS3</name>
<gene>
    <name evidence="1" type="primary">ispF</name>
    <name type="ordered locus">sync_0781</name>
</gene>
<evidence type="ECO:0000255" key="1">
    <source>
        <dbReference type="HAMAP-Rule" id="MF_00107"/>
    </source>
</evidence>
<reference key="1">
    <citation type="journal article" date="2006" name="Proc. Natl. Acad. Sci. U.S.A.">
        <title>Genome sequence of Synechococcus CC9311: insights into adaptation to a coastal environment.</title>
        <authorList>
            <person name="Palenik B."/>
            <person name="Ren Q."/>
            <person name="Dupont C.L."/>
            <person name="Myers G.S."/>
            <person name="Heidelberg J.F."/>
            <person name="Badger J.H."/>
            <person name="Madupu R."/>
            <person name="Nelson W.C."/>
            <person name="Brinkac L.M."/>
            <person name="Dodson R.J."/>
            <person name="Durkin A.S."/>
            <person name="Daugherty S.C."/>
            <person name="Sullivan S.A."/>
            <person name="Khouri H."/>
            <person name="Mohamoud Y."/>
            <person name="Halpin R."/>
            <person name="Paulsen I.T."/>
        </authorList>
    </citation>
    <scope>NUCLEOTIDE SEQUENCE [LARGE SCALE GENOMIC DNA]</scope>
    <source>
        <strain>CC9311</strain>
    </source>
</reference>
<protein>
    <recommendedName>
        <fullName evidence="1">2-C-methyl-D-erythritol 2,4-cyclodiphosphate synthase</fullName>
        <shortName evidence="1">MECDP-synthase</shortName>
        <shortName evidence="1">MECPP-synthase</shortName>
        <shortName evidence="1">MECPS</shortName>
        <ecNumber evidence="1">4.6.1.12</ecNumber>
    </recommendedName>
</protein>